<sequence>MTFSVDKVRADFPVLSREVNGLPLAYLDSAASAQKPSQVIDAEAEFYRHGYAAVHRGIHTLSAQATEKMENVRKRASLFINARSAEELVFVRGTTEGINLVANSWGNSNVRAGDNIIISQMEHHANIVPWQMLCARVGAELRVIPLNPDGTLQLETLPTLFDEKTRLLAITHVSNVLGTENPLAEMITLAHQHGAKVLVDGAQAVMHHPVDVQALDCDFYVFSGHKLYGPTGIGILYVKEALLQEMPPWEGGGSMIATVSLSEGTTWTKAPWRFEAGTPNTGGIIGLGAALEYVSALGLNNIAEYEQNLMHYALSQLESVPDLTLYGPQNRLGVIAFNLGKHHAYDVGSFLDNYGIAVRTGHHCAMPLMAYYNVPAMCRASLAMYNTHEEVDRLVTGLQRIHRLLG</sequence>
<keyword id="KW-0963">Cytoplasm</keyword>
<keyword id="KW-0456">Lyase</keyword>
<keyword id="KW-0663">Pyridoxal phosphate</keyword>
<keyword id="KW-0808">Transferase</keyword>
<protein>
    <recommendedName>
        <fullName evidence="1">Cysteine desulfurase</fullName>
        <ecNumber evidence="1">2.8.1.7</ecNumber>
    </recommendedName>
    <alternativeName>
        <fullName evidence="1">Selenocysteine beta-lyase</fullName>
        <shortName evidence="1">SCL</shortName>
    </alternativeName>
    <alternativeName>
        <fullName evidence="1">Selenocysteine lyase</fullName>
        <ecNumber evidence="1">4.4.1.16</ecNumber>
    </alternativeName>
    <alternativeName>
        <fullName evidence="1">Selenocysteine reductase</fullName>
    </alternativeName>
</protein>
<accession>Q1RBB6</accession>
<dbReference type="EC" id="2.8.1.7" evidence="1"/>
<dbReference type="EC" id="4.4.1.16" evidence="1"/>
<dbReference type="EMBL" id="CP000243">
    <property type="protein sequence ID" value="ABE07348.1"/>
    <property type="molecule type" value="Genomic_DNA"/>
</dbReference>
<dbReference type="RefSeq" id="WP_000144575.1">
    <property type="nucleotide sequence ID" value="NZ_CP064825.1"/>
</dbReference>
<dbReference type="SMR" id="Q1RBB6"/>
<dbReference type="GeneID" id="75204526"/>
<dbReference type="KEGG" id="eci:UTI89_C1872"/>
<dbReference type="HOGENOM" id="CLU_003433_2_5_6"/>
<dbReference type="UniPathway" id="UPA00266"/>
<dbReference type="Proteomes" id="UP000001952">
    <property type="component" value="Chromosome"/>
</dbReference>
<dbReference type="GO" id="GO:0005737">
    <property type="term" value="C:cytoplasm"/>
    <property type="evidence" value="ECO:0007669"/>
    <property type="project" value="UniProtKB-SubCell"/>
</dbReference>
<dbReference type="GO" id="GO:0031071">
    <property type="term" value="F:cysteine desulfurase activity"/>
    <property type="evidence" value="ECO:0007669"/>
    <property type="project" value="UniProtKB-UniRule"/>
</dbReference>
<dbReference type="GO" id="GO:0030170">
    <property type="term" value="F:pyridoxal phosphate binding"/>
    <property type="evidence" value="ECO:0007669"/>
    <property type="project" value="InterPro"/>
</dbReference>
<dbReference type="GO" id="GO:0009000">
    <property type="term" value="F:selenocysteine lyase activity"/>
    <property type="evidence" value="ECO:0007669"/>
    <property type="project" value="UniProtKB-UniRule"/>
</dbReference>
<dbReference type="GO" id="GO:0006534">
    <property type="term" value="P:cysteine metabolic process"/>
    <property type="evidence" value="ECO:0007669"/>
    <property type="project" value="InterPro"/>
</dbReference>
<dbReference type="CDD" id="cd06453">
    <property type="entry name" value="SufS_like"/>
    <property type="match status" value="1"/>
</dbReference>
<dbReference type="FunFam" id="3.40.640.10:FF:000042">
    <property type="entry name" value="Cysteine desulfurase"/>
    <property type="match status" value="1"/>
</dbReference>
<dbReference type="Gene3D" id="3.90.1150.10">
    <property type="entry name" value="Aspartate Aminotransferase, domain 1"/>
    <property type="match status" value="1"/>
</dbReference>
<dbReference type="Gene3D" id="3.40.640.10">
    <property type="entry name" value="Type I PLP-dependent aspartate aminotransferase-like (Major domain)"/>
    <property type="match status" value="1"/>
</dbReference>
<dbReference type="HAMAP" id="MF_01831">
    <property type="entry name" value="SufS_aminotrans_5"/>
    <property type="match status" value="1"/>
</dbReference>
<dbReference type="InterPro" id="IPR000192">
    <property type="entry name" value="Aminotrans_V_dom"/>
</dbReference>
<dbReference type="InterPro" id="IPR020578">
    <property type="entry name" value="Aminotrans_V_PyrdxlP_BS"/>
</dbReference>
<dbReference type="InterPro" id="IPR010970">
    <property type="entry name" value="Cys_dSase_SufS"/>
</dbReference>
<dbReference type="InterPro" id="IPR015424">
    <property type="entry name" value="PyrdxlP-dep_Trfase"/>
</dbReference>
<dbReference type="InterPro" id="IPR015421">
    <property type="entry name" value="PyrdxlP-dep_Trfase_major"/>
</dbReference>
<dbReference type="InterPro" id="IPR015422">
    <property type="entry name" value="PyrdxlP-dep_Trfase_small"/>
</dbReference>
<dbReference type="NCBIfam" id="NF006791">
    <property type="entry name" value="PRK09295.1"/>
    <property type="match status" value="1"/>
</dbReference>
<dbReference type="NCBIfam" id="TIGR01979">
    <property type="entry name" value="sufS"/>
    <property type="match status" value="1"/>
</dbReference>
<dbReference type="PANTHER" id="PTHR43586">
    <property type="entry name" value="CYSTEINE DESULFURASE"/>
    <property type="match status" value="1"/>
</dbReference>
<dbReference type="PANTHER" id="PTHR43586:SF25">
    <property type="entry name" value="CYSTEINE DESULFURASE"/>
    <property type="match status" value="1"/>
</dbReference>
<dbReference type="Pfam" id="PF00266">
    <property type="entry name" value="Aminotran_5"/>
    <property type="match status" value="1"/>
</dbReference>
<dbReference type="SUPFAM" id="SSF53383">
    <property type="entry name" value="PLP-dependent transferases"/>
    <property type="match status" value="1"/>
</dbReference>
<dbReference type="PROSITE" id="PS00595">
    <property type="entry name" value="AA_TRANSFER_CLASS_5"/>
    <property type="match status" value="1"/>
</dbReference>
<organism>
    <name type="scientific">Escherichia coli (strain UTI89 / UPEC)</name>
    <dbReference type="NCBI Taxonomy" id="364106"/>
    <lineage>
        <taxon>Bacteria</taxon>
        <taxon>Pseudomonadati</taxon>
        <taxon>Pseudomonadota</taxon>
        <taxon>Gammaproteobacteria</taxon>
        <taxon>Enterobacterales</taxon>
        <taxon>Enterobacteriaceae</taxon>
        <taxon>Escherichia</taxon>
    </lineage>
</organism>
<name>SUFS_ECOUT</name>
<gene>
    <name evidence="1" type="primary">sufS</name>
    <name type="ordered locus">UTI89_C1872</name>
</gene>
<evidence type="ECO:0000255" key="1">
    <source>
        <dbReference type="HAMAP-Rule" id="MF_01831"/>
    </source>
</evidence>
<feature type="chain" id="PRO_1000070424" description="Cysteine desulfurase">
    <location>
        <begin position="1"/>
        <end position="406"/>
    </location>
</feature>
<feature type="active site" description="Cysteine persulfide intermediate" evidence="1">
    <location>
        <position position="364"/>
    </location>
</feature>
<feature type="modified residue" description="N6-(pyridoxal phosphate)lysine" evidence="1">
    <location>
        <position position="226"/>
    </location>
</feature>
<reference key="1">
    <citation type="journal article" date="2006" name="Proc. Natl. Acad. Sci. U.S.A.">
        <title>Identification of genes subject to positive selection in uropathogenic strains of Escherichia coli: a comparative genomics approach.</title>
        <authorList>
            <person name="Chen S.L."/>
            <person name="Hung C.-S."/>
            <person name="Xu J."/>
            <person name="Reigstad C.S."/>
            <person name="Magrini V."/>
            <person name="Sabo A."/>
            <person name="Blasiar D."/>
            <person name="Bieri T."/>
            <person name="Meyer R.R."/>
            <person name="Ozersky P."/>
            <person name="Armstrong J.R."/>
            <person name="Fulton R.S."/>
            <person name="Latreille J.P."/>
            <person name="Spieth J."/>
            <person name="Hooton T.M."/>
            <person name="Mardis E.R."/>
            <person name="Hultgren S.J."/>
            <person name="Gordon J.I."/>
        </authorList>
    </citation>
    <scope>NUCLEOTIDE SEQUENCE [LARGE SCALE GENOMIC DNA]</scope>
    <source>
        <strain>UTI89 / UPEC</strain>
    </source>
</reference>
<comment type="function">
    <text evidence="1">Cysteine desulfurases mobilize the sulfur from L-cysteine to yield L-alanine, an essential step in sulfur metabolism for biosynthesis of a variety of sulfur-containing biomolecules. Component of the suf operon, which is activated and required under specific conditions such as oxidative stress and iron limitation. Acts as a potent selenocysteine lyase in vitro, that mobilizes selenium from L-selenocysteine. Selenocysteine lyase activity is however unsure in vivo.</text>
</comment>
<comment type="catalytic activity">
    <reaction evidence="1">
        <text>(sulfur carrier)-H + L-cysteine = (sulfur carrier)-SH + L-alanine</text>
        <dbReference type="Rhea" id="RHEA:43892"/>
        <dbReference type="Rhea" id="RHEA-COMP:14737"/>
        <dbReference type="Rhea" id="RHEA-COMP:14739"/>
        <dbReference type="ChEBI" id="CHEBI:29917"/>
        <dbReference type="ChEBI" id="CHEBI:35235"/>
        <dbReference type="ChEBI" id="CHEBI:57972"/>
        <dbReference type="ChEBI" id="CHEBI:64428"/>
        <dbReference type="EC" id="2.8.1.7"/>
    </reaction>
</comment>
<comment type="catalytic activity">
    <reaction evidence="1">
        <text>L-selenocysteine + AH2 = hydrogenselenide + L-alanine + A + H(+)</text>
        <dbReference type="Rhea" id="RHEA:11632"/>
        <dbReference type="ChEBI" id="CHEBI:13193"/>
        <dbReference type="ChEBI" id="CHEBI:15378"/>
        <dbReference type="ChEBI" id="CHEBI:17499"/>
        <dbReference type="ChEBI" id="CHEBI:29317"/>
        <dbReference type="ChEBI" id="CHEBI:57843"/>
        <dbReference type="ChEBI" id="CHEBI:57972"/>
        <dbReference type="EC" id="4.4.1.16"/>
    </reaction>
</comment>
<comment type="cofactor">
    <cofactor evidence="1">
        <name>pyridoxal 5'-phosphate</name>
        <dbReference type="ChEBI" id="CHEBI:597326"/>
    </cofactor>
</comment>
<comment type="pathway">
    <text evidence="1">Cofactor biosynthesis; iron-sulfur cluster biosynthesis.</text>
</comment>
<comment type="subunit">
    <text evidence="1">Homodimer. Interacts with SufE and the SufBCD complex composed of SufB, SufC and SufD. The interaction with SufE is required to mediate the direct transfer of the sulfur atom from the S-sulfanylcysteine.</text>
</comment>
<comment type="subcellular location">
    <subcellularLocation>
        <location evidence="1">Cytoplasm</location>
    </subcellularLocation>
</comment>
<comment type="similarity">
    <text evidence="1">Belongs to the class-V pyridoxal-phosphate-dependent aminotransferase family. Csd subfamily.</text>
</comment>
<proteinExistence type="inferred from homology"/>